<organism>
    <name type="scientific">Escherichia coli (strain ATCC 8739 / DSM 1576 / NBRC 3972 / NCIMB 8545 / WDCM 00012 / Crooks)</name>
    <dbReference type="NCBI Taxonomy" id="481805"/>
    <lineage>
        <taxon>Bacteria</taxon>
        <taxon>Pseudomonadati</taxon>
        <taxon>Pseudomonadota</taxon>
        <taxon>Gammaproteobacteria</taxon>
        <taxon>Enterobacterales</taxon>
        <taxon>Enterobacteriaceae</taxon>
        <taxon>Escherichia</taxon>
    </lineage>
</organism>
<dbReference type="EMBL" id="CP000946">
    <property type="protein sequence ID" value="ACA76816.1"/>
    <property type="molecule type" value="Genomic_DNA"/>
</dbReference>
<dbReference type="RefSeq" id="WP_000028953.1">
    <property type="nucleotide sequence ID" value="NZ_MTFT01000002.1"/>
</dbReference>
<dbReference type="SMR" id="B1IWD3"/>
<dbReference type="GeneID" id="93774608"/>
<dbReference type="KEGG" id="ecl:EcolC_1149"/>
<dbReference type="HOGENOM" id="CLU_069054_5_1_6"/>
<dbReference type="GO" id="GO:0005829">
    <property type="term" value="C:cytosol"/>
    <property type="evidence" value="ECO:0007669"/>
    <property type="project" value="TreeGrafter"/>
</dbReference>
<dbReference type="GO" id="GO:0051537">
    <property type="term" value="F:2 iron, 2 sulfur cluster binding"/>
    <property type="evidence" value="ECO:0007669"/>
    <property type="project" value="TreeGrafter"/>
</dbReference>
<dbReference type="GO" id="GO:0005506">
    <property type="term" value="F:iron ion binding"/>
    <property type="evidence" value="ECO:0007669"/>
    <property type="project" value="UniProtKB-UniRule"/>
</dbReference>
<dbReference type="GO" id="GO:0016226">
    <property type="term" value="P:iron-sulfur cluster assembly"/>
    <property type="evidence" value="ECO:0007669"/>
    <property type="project" value="UniProtKB-UniRule"/>
</dbReference>
<dbReference type="FunFam" id="2.60.300.12:FF:000001">
    <property type="entry name" value="Iron-binding protein IscA"/>
    <property type="match status" value="1"/>
</dbReference>
<dbReference type="Gene3D" id="2.60.300.12">
    <property type="entry name" value="HesB-like domain"/>
    <property type="match status" value="1"/>
</dbReference>
<dbReference type="HAMAP" id="MF_01429">
    <property type="entry name" value="Fe_S_insert_IscA"/>
    <property type="match status" value="1"/>
</dbReference>
<dbReference type="InterPro" id="IPR050322">
    <property type="entry name" value="Fe-S_cluster_asmbl/transfer"/>
</dbReference>
<dbReference type="InterPro" id="IPR000361">
    <property type="entry name" value="FeS_biogenesis"/>
</dbReference>
<dbReference type="InterPro" id="IPR016092">
    <property type="entry name" value="FeS_cluster_insertion"/>
</dbReference>
<dbReference type="InterPro" id="IPR017870">
    <property type="entry name" value="FeS_cluster_insertion_CS"/>
</dbReference>
<dbReference type="InterPro" id="IPR035903">
    <property type="entry name" value="HesB-like_dom_sf"/>
</dbReference>
<dbReference type="InterPro" id="IPR011302">
    <property type="entry name" value="IscA_proteobacteria"/>
</dbReference>
<dbReference type="NCBIfam" id="TIGR00049">
    <property type="entry name" value="iron-sulfur cluster assembly accessory protein"/>
    <property type="match status" value="1"/>
</dbReference>
<dbReference type="NCBIfam" id="TIGR02011">
    <property type="entry name" value="IscA"/>
    <property type="match status" value="1"/>
</dbReference>
<dbReference type="NCBIfam" id="NF007049">
    <property type="entry name" value="PRK09502.1"/>
    <property type="match status" value="1"/>
</dbReference>
<dbReference type="PANTHER" id="PTHR10072:SF41">
    <property type="entry name" value="IRON-SULFUR CLUSTER ASSEMBLY 1 HOMOLOG, MITOCHONDRIAL"/>
    <property type="match status" value="1"/>
</dbReference>
<dbReference type="PANTHER" id="PTHR10072">
    <property type="entry name" value="IRON-SULFUR CLUSTER ASSEMBLY PROTEIN"/>
    <property type="match status" value="1"/>
</dbReference>
<dbReference type="Pfam" id="PF01521">
    <property type="entry name" value="Fe-S_biosyn"/>
    <property type="match status" value="1"/>
</dbReference>
<dbReference type="SUPFAM" id="SSF89360">
    <property type="entry name" value="HesB-like domain"/>
    <property type="match status" value="1"/>
</dbReference>
<dbReference type="PROSITE" id="PS01152">
    <property type="entry name" value="HESB"/>
    <property type="match status" value="1"/>
</dbReference>
<accession>B1IWD3</accession>
<keyword id="KW-0408">Iron</keyword>
<keyword id="KW-0479">Metal-binding</keyword>
<sequence>MSITLSDSAAARVNTFLANRGKGFGLRLGVRTSGCSGMAYVLEFVDEPTPEDIVFEDKGVKVVVDGKSLQFLDGTQLDFVKEGLNEGFKFTNPNVKDECGCGESFHV</sequence>
<protein>
    <recommendedName>
        <fullName evidence="1">Iron-binding protein IscA</fullName>
    </recommendedName>
    <alternativeName>
        <fullName evidence="1">Iron-sulfur cluster assembly protein</fullName>
    </alternativeName>
</protein>
<feature type="chain" id="PRO_1000087429" description="Iron-binding protein IscA">
    <location>
        <begin position="1"/>
        <end position="107"/>
    </location>
</feature>
<feature type="binding site" evidence="1">
    <location>
        <position position="35"/>
    </location>
    <ligand>
        <name>Fe cation</name>
        <dbReference type="ChEBI" id="CHEBI:24875"/>
    </ligand>
</feature>
<feature type="binding site" evidence="1">
    <location>
        <position position="99"/>
    </location>
    <ligand>
        <name>Fe cation</name>
        <dbReference type="ChEBI" id="CHEBI:24875"/>
    </ligand>
</feature>
<feature type="binding site" evidence="1">
    <location>
        <position position="101"/>
    </location>
    <ligand>
        <name>Fe cation</name>
        <dbReference type="ChEBI" id="CHEBI:24875"/>
    </ligand>
</feature>
<gene>
    <name evidence="1" type="primary">iscA</name>
    <name type="ordered locus">EcolC_1149</name>
</gene>
<reference key="1">
    <citation type="submission" date="2008-02" db="EMBL/GenBank/DDBJ databases">
        <title>Complete sequence of Escherichia coli C str. ATCC 8739.</title>
        <authorList>
            <person name="Copeland A."/>
            <person name="Lucas S."/>
            <person name="Lapidus A."/>
            <person name="Glavina del Rio T."/>
            <person name="Dalin E."/>
            <person name="Tice H."/>
            <person name="Bruce D."/>
            <person name="Goodwin L."/>
            <person name="Pitluck S."/>
            <person name="Kiss H."/>
            <person name="Brettin T."/>
            <person name="Detter J.C."/>
            <person name="Han C."/>
            <person name="Kuske C.R."/>
            <person name="Schmutz J."/>
            <person name="Larimer F."/>
            <person name="Land M."/>
            <person name="Hauser L."/>
            <person name="Kyrpides N."/>
            <person name="Mikhailova N."/>
            <person name="Ingram L."/>
            <person name="Richardson P."/>
        </authorList>
    </citation>
    <scope>NUCLEOTIDE SEQUENCE [LARGE SCALE GENOMIC DNA]</scope>
    <source>
        <strain>ATCC 8739 / DSM 1576 / NBRC 3972 / NCIMB 8545 / WDCM 00012 / Crooks</strain>
    </source>
</reference>
<evidence type="ECO:0000255" key="1">
    <source>
        <dbReference type="HAMAP-Rule" id="MF_01429"/>
    </source>
</evidence>
<comment type="function">
    <text evidence="1">Is able to transfer iron-sulfur clusters to apo-ferredoxin. Multiple cycles of [2Fe2S] cluster formation and transfer are observed, suggesting that IscA acts catalytically. Recruits intracellular free iron so as to provide iron for the assembly of transient iron-sulfur cluster in IscU in the presence of IscS, L-cysteine and the thioredoxin reductase system TrxA/TrxB.</text>
</comment>
<comment type="cofactor">
    <cofactor evidence="1">
        <name>Fe cation</name>
        <dbReference type="ChEBI" id="CHEBI:24875"/>
    </cofactor>
    <text evidence="1">Binds 2 iron ions per dimer. The dimer may bind additional iron ions.</text>
</comment>
<comment type="subunit">
    <text evidence="1">Homodimer; may form tetramers and higher multimers.</text>
</comment>
<comment type="similarity">
    <text evidence="1">Belongs to the HesB/IscA family.</text>
</comment>
<name>ISCA_ECOLC</name>
<proteinExistence type="inferred from homology"/>